<comment type="function">
    <text evidence="1">Involved in nonsense-mediated decay (NMD) of mRNAs containing premature stop codons. Probable component of kinase complex containing nonC and recruited to stalled ribosomes (By similarity).</text>
</comment>
<comment type="similarity">
    <text evidence="4">Belongs to the SMG8 family.</text>
</comment>
<gene>
    <name type="ORF">GF14070</name>
</gene>
<dbReference type="EMBL" id="CH902620">
    <property type="protein sequence ID" value="EDV32409.1"/>
    <property type="molecule type" value="Genomic_DNA"/>
</dbReference>
<dbReference type="SMR" id="B3MJV4"/>
<dbReference type="FunCoup" id="B3MJV4">
    <property type="interactions" value="2857"/>
</dbReference>
<dbReference type="STRING" id="7217.B3MJV4"/>
<dbReference type="EnsemblMetazoa" id="FBtr0118770">
    <property type="protein sequence ID" value="FBpp0117262"/>
    <property type="gene ID" value="FBgn0091097"/>
</dbReference>
<dbReference type="EnsemblMetazoa" id="XM_001963152.4">
    <property type="protein sequence ID" value="XP_001963188.1"/>
    <property type="gene ID" value="LOC6496898"/>
</dbReference>
<dbReference type="GeneID" id="6496898"/>
<dbReference type="KEGG" id="dan:6496898"/>
<dbReference type="eggNOG" id="KOG3692">
    <property type="taxonomic scope" value="Eukaryota"/>
</dbReference>
<dbReference type="HOGENOM" id="CLU_008116_0_0_1"/>
<dbReference type="InParanoid" id="B3MJV4"/>
<dbReference type="OMA" id="HVCHIVV"/>
<dbReference type="OrthoDB" id="63589at2759"/>
<dbReference type="PhylomeDB" id="B3MJV4"/>
<dbReference type="Proteomes" id="UP000007801">
    <property type="component" value="Unassembled WGS sequence"/>
</dbReference>
<dbReference type="GO" id="GO:0000184">
    <property type="term" value="P:nuclear-transcribed mRNA catabolic process, nonsense-mediated decay"/>
    <property type="evidence" value="ECO:0000250"/>
    <property type="project" value="UniProtKB"/>
</dbReference>
<dbReference type="InterPro" id="IPR019354">
    <property type="entry name" value="SMG8-like"/>
</dbReference>
<dbReference type="PANTHER" id="PTHR13091">
    <property type="entry name" value="AMPLIFIED IN BREAST CANCER 2-RELATED"/>
    <property type="match status" value="1"/>
</dbReference>
<dbReference type="PANTHER" id="PTHR13091:SF0">
    <property type="entry name" value="NONSENSE-MEDIATED MRNA DECAY FACTOR SMG8"/>
    <property type="match status" value="1"/>
</dbReference>
<dbReference type="Pfam" id="PF10220">
    <property type="entry name" value="Smg8_Smg9"/>
    <property type="match status" value="1"/>
</dbReference>
<feature type="chain" id="PRO_0000378172" description="Nonsense-mediated mRNA decay factor SMG8">
    <location>
        <begin position="1"/>
        <end position="939"/>
    </location>
</feature>
<feature type="region of interest" description="Disordered" evidence="3">
    <location>
        <begin position="561"/>
        <end position="600"/>
    </location>
</feature>
<feature type="region of interest" description="Disordered" evidence="3">
    <location>
        <begin position="617"/>
        <end position="645"/>
    </location>
</feature>
<feature type="compositionally biased region" description="Acidic residues" evidence="3">
    <location>
        <begin position="567"/>
        <end position="587"/>
    </location>
</feature>
<feature type="compositionally biased region" description="Low complexity" evidence="3">
    <location>
        <begin position="617"/>
        <end position="629"/>
    </location>
</feature>
<keyword id="KW-0866">Nonsense-mediated mRNA decay</keyword>
<keyword id="KW-1185">Reference proteome</keyword>
<evidence type="ECO:0000250" key="1"/>
<evidence type="ECO:0000250" key="2">
    <source>
        <dbReference type="UniProtKB" id="Q8ND04"/>
    </source>
</evidence>
<evidence type="ECO:0000256" key="3">
    <source>
        <dbReference type="SAM" id="MobiDB-lite"/>
    </source>
</evidence>
<evidence type="ECO:0000305" key="4"/>
<reference key="1">
    <citation type="journal article" date="2007" name="Nature">
        <title>Evolution of genes and genomes on the Drosophila phylogeny.</title>
        <authorList>
            <consortium name="Drosophila 12 genomes consortium"/>
        </authorList>
    </citation>
    <scope>NUCLEOTIDE SEQUENCE [LARGE SCALE GENOMIC DNA]</scope>
    <source>
        <strain>Tucson 14024-0371.13</strain>
    </source>
</reference>
<proteinExistence type="inferred from homology"/>
<protein>
    <recommendedName>
        <fullName evidence="2">Nonsense-mediated mRNA decay factor SMG8</fullName>
    </recommendedName>
    <alternativeName>
        <fullName>Protein smg-8 homolog</fullName>
    </alternativeName>
</protein>
<organism>
    <name type="scientific">Drosophila ananassae</name>
    <name type="common">Fruit fly</name>
    <dbReference type="NCBI Taxonomy" id="7217"/>
    <lineage>
        <taxon>Eukaryota</taxon>
        <taxon>Metazoa</taxon>
        <taxon>Ecdysozoa</taxon>
        <taxon>Arthropoda</taxon>
        <taxon>Hexapoda</taxon>
        <taxon>Insecta</taxon>
        <taxon>Pterygota</taxon>
        <taxon>Neoptera</taxon>
        <taxon>Endopterygota</taxon>
        <taxon>Diptera</taxon>
        <taxon>Brachycera</taxon>
        <taxon>Muscomorpha</taxon>
        <taxon>Ephydroidea</taxon>
        <taxon>Drosophilidae</taxon>
        <taxon>Drosophila</taxon>
        <taxon>Sophophora</taxon>
    </lineage>
</organism>
<sequence>MKDYYTWTYPDVPENVAQELLQLENSMVVVGIVGRSKCERANKMQAFGMSPPMEHTPADGQVQCYYKRGTSCIFLHFETTYDEPILHRMIEDSMADHQNAFDFDHFYEQMRSRFVRMMLLALHTCHIIVYVETGPTFDPTLVTVFQLLKFSREQHLKQFLPQMLRDTPAAKLGEKSRLCAPRILFLFENFPSDELKTRENVSAYEFQTEDNIYEMLRHHHIFTNSSPSSLVALPNNKQFVYFNAHEELHPDYLLKAIDCLNKTMFKPDMREEEEDLEILELAPFEGFCKPFGPPGERDVEAQQYKRQHTAWHFLQRHIQDALHGCFDEGSFKQLPHLGQFQLLSFPEWQGCMDTLTQLLVENAKDTNFETNNEEYKNFLLNFEDSLNYEKKFWAHLCELGLKKGISSYKSSAPANYGSATHRKLLAEATIAFEEEGRGPPAQAALARMAAICLKHWQDGRQQCEKLSLRSQPCTLPKDVPHDKHNSGVIHISSCNCGRTQGRREDPFNLRQANYDFYELIAQICNLCVKVKQYQFPIFEPSVSDYRAAAFDAAFPMLNTGKICTPQGEDENEDGETEEADEDTEEKEQAEGDNCSQQLSPTFGSDLNMSIAGFGASLNESQESSEQLSGSEHESPNSGTSSADTENELVLQIKEPARKESTPTGGFSTSTTEYLPGLVHTVSDFGLLPLFPSWSLACVGPSSIYSHNTGLQEHFQSGFLSGANFLLPWDVLLRLVHANKHHQQHHHNMHLQQHPGKKQQRWKKQGDRLSIKIFVGMEYECSRGHRFMMCAPDRVLRGGADIERDTCNKVVHSNMPLYYPCPCRSQSNYLAQLMRIHVVTPKAPVNIIVDPKVCVGKYTFTLGTIIPPRLSQSAYWILRLPFVYQGDNVMIAPPEKLDPDNPMAGGYLLPGMFGVAETDANMDLSNPSRMGSTAGTFIRI</sequence>
<accession>B3MJV4</accession>
<name>SMG8_DROAN</name>